<dbReference type="EC" id="3.2.2.23" evidence="2"/>
<dbReference type="EC" id="4.2.99.18" evidence="2"/>
<dbReference type="EMBL" id="CP000431">
    <property type="protein sequence ID" value="ABG98296.1"/>
    <property type="molecule type" value="Genomic_DNA"/>
</dbReference>
<dbReference type="RefSeq" id="WP_011598388.1">
    <property type="nucleotide sequence ID" value="NC_008268.1"/>
</dbReference>
<dbReference type="SMR" id="Q0S2E0"/>
<dbReference type="KEGG" id="rha:RHA1_ro06523"/>
<dbReference type="PATRIC" id="fig|101510.16.peg.6577"/>
<dbReference type="eggNOG" id="COG0266">
    <property type="taxonomic scope" value="Bacteria"/>
</dbReference>
<dbReference type="HOGENOM" id="CLU_038423_1_2_11"/>
<dbReference type="OrthoDB" id="9800855at2"/>
<dbReference type="Proteomes" id="UP000008710">
    <property type="component" value="Chromosome"/>
</dbReference>
<dbReference type="GO" id="GO:0034039">
    <property type="term" value="F:8-oxo-7,8-dihydroguanine DNA N-glycosylase activity"/>
    <property type="evidence" value="ECO:0007669"/>
    <property type="project" value="TreeGrafter"/>
</dbReference>
<dbReference type="GO" id="GO:0140078">
    <property type="term" value="F:class I DNA-(apurinic or apyrimidinic site) endonuclease activity"/>
    <property type="evidence" value="ECO:0007669"/>
    <property type="project" value="UniProtKB-EC"/>
</dbReference>
<dbReference type="GO" id="GO:0003684">
    <property type="term" value="F:damaged DNA binding"/>
    <property type="evidence" value="ECO:0007669"/>
    <property type="project" value="InterPro"/>
</dbReference>
<dbReference type="GO" id="GO:0008270">
    <property type="term" value="F:zinc ion binding"/>
    <property type="evidence" value="ECO:0007669"/>
    <property type="project" value="UniProtKB-UniRule"/>
</dbReference>
<dbReference type="GO" id="GO:0006284">
    <property type="term" value="P:base-excision repair"/>
    <property type="evidence" value="ECO:0007669"/>
    <property type="project" value="InterPro"/>
</dbReference>
<dbReference type="CDD" id="cd08966">
    <property type="entry name" value="EcFpg-like_N"/>
    <property type="match status" value="1"/>
</dbReference>
<dbReference type="FunFam" id="1.10.8.50:FF:000003">
    <property type="entry name" value="Formamidopyrimidine-DNA glycosylase"/>
    <property type="match status" value="1"/>
</dbReference>
<dbReference type="FunFam" id="3.20.190.10:FF:000006">
    <property type="entry name" value="Formamidopyrimidine-DNA glycosylase"/>
    <property type="match status" value="1"/>
</dbReference>
<dbReference type="Gene3D" id="1.10.8.50">
    <property type="match status" value="1"/>
</dbReference>
<dbReference type="Gene3D" id="3.20.190.10">
    <property type="entry name" value="MutM-like, N-terminal"/>
    <property type="match status" value="1"/>
</dbReference>
<dbReference type="HAMAP" id="MF_00103">
    <property type="entry name" value="Fapy_DNA_glycosyl"/>
    <property type="match status" value="1"/>
</dbReference>
<dbReference type="InterPro" id="IPR015886">
    <property type="entry name" value="DNA_glyclase/AP_lyase_DNA-bd"/>
</dbReference>
<dbReference type="InterPro" id="IPR020629">
    <property type="entry name" value="Formamido-pyr_DNA_Glyclase"/>
</dbReference>
<dbReference type="InterPro" id="IPR012319">
    <property type="entry name" value="FPG_cat"/>
</dbReference>
<dbReference type="InterPro" id="IPR035937">
    <property type="entry name" value="MutM-like_N-ter"/>
</dbReference>
<dbReference type="InterPro" id="IPR010979">
    <property type="entry name" value="Ribosomal_uS13-like_H2TH"/>
</dbReference>
<dbReference type="InterPro" id="IPR000214">
    <property type="entry name" value="Znf_DNA_glyclase/AP_lyase"/>
</dbReference>
<dbReference type="InterPro" id="IPR010663">
    <property type="entry name" value="Znf_FPG/IleRS"/>
</dbReference>
<dbReference type="NCBIfam" id="TIGR00577">
    <property type="entry name" value="fpg"/>
    <property type="match status" value="1"/>
</dbReference>
<dbReference type="NCBIfam" id="NF002211">
    <property type="entry name" value="PRK01103.1"/>
    <property type="match status" value="1"/>
</dbReference>
<dbReference type="PANTHER" id="PTHR22993">
    <property type="entry name" value="FORMAMIDOPYRIMIDINE-DNA GLYCOSYLASE"/>
    <property type="match status" value="1"/>
</dbReference>
<dbReference type="PANTHER" id="PTHR22993:SF9">
    <property type="entry name" value="FORMAMIDOPYRIMIDINE-DNA GLYCOSYLASE"/>
    <property type="match status" value="1"/>
</dbReference>
<dbReference type="Pfam" id="PF01149">
    <property type="entry name" value="Fapy_DNA_glyco"/>
    <property type="match status" value="1"/>
</dbReference>
<dbReference type="Pfam" id="PF06831">
    <property type="entry name" value="H2TH"/>
    <property type="match status" value="1"/>
</dbReference>
<dbReference type="Pfam" id="PF06827">
    <property type="entry name" value="zf-FPG_IleRS"/>
    <property type="match status" value="1"/>
</dbReference>
<dbReference type="SMART" id="SM00898">
    <property type="entry name" value="Fapy_DNA_glyco"/>
    <property type="match status" value="1"/>
</dbReference>
<dbReference type="SMART" id="SM01232">
    <property type="entry name" value="H2TH"/>
    <property type="match status" value="1"/>
</dbReference>
<dbReference type="SUPFAM" id="SSF57716">
    <property type="entry name" value="Glucocorticoid receptor-like (DNA-binding domain)"/>
    <property type="match status" value="1"/>
</dbReference>
<dbReference type="SUPFAM" id="SSF81624">
    <property type="entry name" value="N-terminal domain of MutM-like DNA repair proteins"/>
    <property type="match status" value="1"/>
</dbReference>
<dbReference type="SUPFAM" id="SSF46946">
    <property type="entry name" value="S13-like H2TH domain"/>
    <property type="match status" value="1"/>
</dbReference>
<dbReference type="PROSITE" id="PS51068">
    <property type="entry name" value="FPG_CAT"/>
    <property type="match status" value="1"/>
</dbReference>
<dbReference type="PROSITE" id="PS51066">
    <property type="entry name" value="ZF_FPG_2"/>
    <property type="match status" value="1"/>
</dbReference>
<reference key="1">
    <citation type="journal article" date="2006" name="Proc. Natl. Acad. Sci. U.S.A.">
        <title>The complete genome of Rhodococcus sp. RHA1 provides insights into a catabolic powerhouse.</title>
        <authorList>
            <person name="McLeod M.P."/>
            <person name="Warren R.L."/>
            <person name="Hsiao W.W.L."/>
            <person name="Araki N."/>
            <person name="Myhre M."/>
            <person name="Fernandes C."/>
            <person name="Miyazawa D."/>
            <person name="Wong W."/>
            <person name="Lillquist A.L."/>
            <person name="Wang D."/>
            <person name="Dosanjh M."/>
            <person name="Hara H."/>
            <person name="Petrescu A."/>
            <person name="Morin R.D."/>
            <person name="Yang G."/>
            <person name="Stott J.M."/>
            <person name="Schein J.E."/>
            <person name="Shin H."/>
            <person name="Smailus D."/>
            <person name="Siddiqui A.S."/>
            <person name="Marra M.A."/>
            <person name="Jones S.J.M."/>
            <person name="Holt R."/>
            <person name="Brinkman F.S.L."/>
            <person name="Miyauchi K."/>
            <person name="Fukuda M."/>
            <person name="Davies J.E."/>
            <person name="Mohn W.W."/>
            <person name="Eltis L.D."/>
        </authorList>
    </citation>
    <scope>NUCLEOTIDE SEQUENCE [LARGE SCALE GENOMIC DNA]</scope>
    <source>
        <strain>RHA1</strain>
    </source>
</reference>
<sequence>MPELPEVEVVRRGLERHIVGASIDSVDILHPRAIRRHLPGAADLAGQLTGERIASADRRGKYLWLVLEPSTVALVVHLGMSGQMLVQPPELPTEKHLRIRARLDSGLDLRFVDQRTFGGWALAPLVDVDGSLVPDSVAHIARDPLDPRFDLAATVKVVRGKHTEVKRALLDQTVVSGIGNIYADEALWRARIHGNRLTDRLSGPKVREVLTAAQEVMREALTQGGTSFDALYVNVNGESGYFDRSLSAYGQEDRPCPRCGTAIRREKFMNRSSFSCPKCQPAPRRSLAKSSV</sequence>
<protein>
    <recommendedName>
        <fullName evidence="2">Formamidopyrimidine-DNA glycosylase</fullName>
        <shortName evidence="2">Fapy-DNA glycosylase</shortName>
        <ecNumber evidence="2">3.2.2.23</ecNumber>
    </recommendedName>
    <alternativeName>
        <fullName evidence="2">DNA-(apurinic or apyrimidinic site) lyase MutM</fullName>
        <shortName evidence="2">AP lyase MutM</shortName>
        <ecNumber evidence="2">4.2.99.18</ecNumber>
    </alternativeName>
</protein>
<comment type="function">
    <text evidence="2">Involved in base excision repair of DNA damaged by oxidation or by mutagenic agents. Acts as a DNA glycosylase that recognizes and removes damaged bases. Has a preference for oxidized purines, such as 7,8-dihydro-8-oxoguanine (8-oxoG). Has AP (apurinic/apyrimidinic) lyase activity and introduces nicks in the DNA strand. Cleaves the DNA backbone by beta-delta elimination to generate a single-strand break at the site of the removed base with both 3'- and 5'-phosphates.</text>
</comment>
<comment type="catalytic activity">
    <reaction evidence="2">
        <text>Hydrolysis of DNA containing ring-opened 7-methylguanine residues, releasing 2,6-diamino-4-hydroxy-5-(N-methyl)formamidopyrimidine.</text>
        <dbReference type="EC" id="3.2.2.23"/>
    </reaction>
</comment>
<comment type="catalytic activity">
    <reaction evidence="2">
        <text>2'-deoxyribonucleotide-(2'-deoxyribose 5'-phosphate)-2'-deoxyribonucleotide-DNA = a 3'-end 2'-deoxyribonucleotide-(2,3-dehydro-2,3-deoxyribose 5'-phosphate)-DNA + a 5'-end 5'-phospho-2'-deoxyribonucleoside-DNA + H(+)</text>
        <dbReference type="Rhea" id="RHEA:66592"/>
        <dbReference type="Rhea" id="RHEA-COMP:13180"/>
        <dbReference type="Rhea" id="RHEA-COMP:16897"/>
        <dbReference type="Rhea" id="RHEA-COMP:17067"/>
        <dbReference type="ChEBI" id="CHEBI:15378"/>
        <dbReference type="ChEBI" id="CHEBI:136412"/>
        <dbReference type="ChEBI" id="CHEBI:157695"/>
        <dbReference type="ChEBI" id="CHEBI:167181"/>
        <dbReference type="EC" id="4.2.99.18"/>
    </reaction>
</comment>
<comment type="cofactor">
    <cofactor evidence="2">
        <name>Zn(2+)</name>
        <dbReference type="ChEBI" id="CHEBI:29105"/>
    </cofactor>
    <text evidence="2">Binds 1 zinc ion per subunit.</text>
</comment>
<comment type="subunit">
    <text evidence="2">Monomer.</text>
</comment>
<comment type="similarity">
    <text evidence="2">Belongs to the FPG family.</text>
</comment>
<accession>Q0S2E0</accession>
<keyword id="KW-0227">DNA damage</keyword>
<keyword id="KW-0234">DNA repair</keyword>
<keyword id="KW-0238">DNA-binding</keyword>
<keyword id="KW-0326">Glycosidase</keyword>
<keyword id="KW-0378">Hydrolase</keyword>
<keyword id="KW-0456">Lyase</keyword>
<keyword id="KW-0479">Metal-binding</keyword>
<keyword id="KW-0511">Multifunctional enzyme</keyword>
<keyword id="KW-0862">Zinc</keyword>
<keyword id="KW-0863">Zinc-finger</keyword>
<organism>
    <name type="scientific">Rhodococcus jostii (strain RHA1)</name>
    <dbReference type="NCBI Taxonomy" id="101510"/>
    <lineage>
        <taxon>Bacteria</taxon>
        <taxon>Bacillati</taxon>
        <taxon>Actinomycetota</taxon>
        <taxon>Actinomycetes</taxon>
        <taxon>Mycobacteriales</taxon>
        <taxon>Nocardiaceae</taxon>
        <taxon>Rhodococcus</taxon>
    </lineage>
</organism>
<feature type="initiator methionine" description="Removed" evidence="1">
    <location>
        <position position="1"/>
    </location>
</feature>
<feature type="chain" id="PRO_1000008760" description="Formamidopyrimidine-DNA glycosylase">
    <location>
        <begin position="2"/>
        <end position="292"/>
    </location>
</feature>
<feature type="zinc finger region" description="FPG-type" evidence="2">
    <location>
        <begin position="247"/>
        <end position="281"/>
    </location>
</feature>
<feature type="active site" description="Schiff-base intermediate with DNA" evidence="2">
    <location>
        <position position="2"/>
    </location>
</feature>
<feature type="active site" description="Proton donor" evidence="2">
    <location>
        <position position="3"/>
    </location>
</feature>
<feature type="active site" description="Proton donor; for beta-elimination activity" evidence="2">
    <location>
        <position position="61"/>
    </location>
</feature>
<feature type="active site" description="Proton donor; for delta-elimination activity" evidence="2">
    <location>
        <position position="271"/>
    </location>
</feature>
<feature type="binding site" evidence="2">
    <location>
        <position position="96"/>
    </location>
    <ligand>
        <name>DNA</name>
        <dbReference type="ChEBI" id="CHEBI:16991"/>
    </ligand>
</feature>
<feature type="binding site" evidence="2">
    <location>
        <position position="115"/>
    </location>
    <ligand>
        <name>DNA</name>
        <dbReference type="ChEBI" id="CHEBI:16991"/>
    </ligand>
</feature>
<feature type="binding site" evidence="2">
    <location>
        <position position="161"/>
    </location>
    <ligand>
        <name>DNA</name>
        <dbReference type="ChEBI" id="CHEBI:16991"/>
    </ligand>
</feature>
<evidence type="ECO:0000250" key="1"/>
<evidence type="ECO:0000255" key="2">
    <source>
        <dbReference type="HAMAP-Rule" id="MF_00103"/>
    </source>
</evidence>
<gene>
    <name evidence="2" type="primary">mutM</name>
    <name evidence="2" type="synonym">fpg</name>
    <name type="ordered locus">RHA1_ro06523</name>
</gene>
<name>FPG_RHOJR</name>
<proteinExistence type="inferred from homology"/>